<feature type="chain" id="PRO_1000071714" description="Diaminopimelate epimerase">
    <location>
        <begin position="1"/>
        <end position="249"/>
    </location>
</feature>
<feature type="active site" description="Proton donor" evidence="1">
    <location>
        <position position="69"/>
    </location>
</feature>
<feature type="active site" description="Proton acceptor" evidence="1">
    <location>
        <position position="192"/>
    </location>
</feature>
<feature type="binding site" evidence="1">
    <location>
        <position position="11"/>
    </location>
    <ligand>
        <name>substrate</name>
    </ligand>
</feature>
<feature type="binding site" evidence="1">
    <location>
        <position position="60"/>
    </location>
    <ligand>
        <name>substrate</name>
    </ligand>
</feature>
<feature type="binding site" evidence="1">
    <location>
        <begin position="70"/>
        <end position="71"/>
    </location>
    <ligand>
        <name>substrate</name>
    </ligand>
</feature>
<feature type="binding site" evidence="1">
    <location>
        <position position="164"/>
    </location>
    <ligand>
        <name>substrate</name>
    </ligand>
</feature>
<feature type="binding site" evidence="1">
    <location>
        <begin position="182"/>
        <end position="183"/>
    </location>
    <ligand>
        <name>substrate</name>
    </ligand>
</feature>
<feature type="binding site" evidence="1">
    <location>
        <begin position="193"/>
        <end position="194"/>
    </location>
    <ligand>
        <name>substrate</name>
    </ligand>
</feature>
<feature type="site" description="Could be important to modulate the pK values of the two catalytic cysteine residues" evidence="1">
    <location>
        <position position="138"/>
    </location>
</feature>
<feature type="site" description="Could be important to modulate the pK values of the two catalytic cysteine residues" evidence="1">
    <location>
        <position position="182"/>
    </location>
</feature>
<evidence type="ECO:0000255" key="1">
    <source>
        <dbReference type="HAMAP-Rule" id="MF_00197"/>
    </source>
</evidence>
<organism>
    <name type="scientific">Campylobacter jejuni subsp. jejuni serotype O:6 (strain 81116 / NCTC 11828)</name>
    <dbReference type="NCBI Taxonomy" id="407148"/>
    <lineage>
        <taxon>Bacteria</taxon>
        <taxon>Pseudomonadati</taxon>
        <taxon>Campylobacterota</taxon>
        <taxon>Epsilonproteobacteria</taxon>
        <taxon>Campylobacterales</taxon>
        <taxon>Campylobacteraceae</taxon>
        <taxon>Campylobacter</taxon>
    </lineage>
</organism>
<gene>
    <name evidence="1" type="primary">dapF</name>
    <name type="ordered locus">C8J_1430</name>
</gene>
<name>DAPF_CAMJ8</name>
<dbReference type="EC" id="5.1.1.7" evidence="1"/>
<dbReference type="EMBL" id="CP000814">
    <property type="protein sequence ID" value="ABV53028.1"/>
    <property type="molecule type" value="Genomic_DNA"/>
</dbReference>
<dbReference type="RefSeq" id="WP_002867072.1">
    <property type="nucleotide sequence ID" value="NC_009839.1"/>
</dbReference>
<dbReference type="SMR" id="A8FNJ1"/>
<dbReference type="KEGG" id="cju:C8J_1430"/>
<dbReference type="HOGENOM" id="CLU_053306_3_2_7"/>
<dbReference type="UniPathway" id="UPA00034">
    <property type="reaction ID" value="UER00025"/>
</dbReference>
<dbReference type="GO" id="GO:0005829">
    <property type="term" value="C:cytosol"/>
    <property type="evidence" value="ECO:0007669"/>
    <property type="project" value="TreeGrafter"/>
</dbReference>
<dbReference type="GO" id="GO:0008837">
    <property type="term" value="F:diaminopimelate epimerase activity"/>
    <property type="evidence" value="ECO:0007669"/>
    <property type="project" value="UniProtKB-UniRule"/>
</dbReference>
<dbReference type="GO" id="GO:0009089">
    <property type="term" value="P:lysine biosynthetic process via diaminopimelate"/>
    <property type="evidence" value="ECO:0007669"/>
    <property type="project" value="UniProtKB-UniRule"/>
</dbReference>
<dbReference type="Gene3D" id="3.10.310.10">
    <property type="entry name" value="Diaminopimelate Epimerase, Chain A, domain 1"/>
    <property type="match status" value="2"/>
</dbReference>
<dbReference type="HAMAP" id="MF_00197">
    <property type="entry name" value="DAP_epimerase"/>
    <property type="match status" value="1"/>
</dbReference>
<dbReference type="InterPro" id="IPR018510">
    <property type="entry name" value="DAP_epimerase_AS"/>
</dbReference>
<dbReference type="InterPro" id="IPR001653">
    <property type="entry name" value="DAP_epimerase_DapF"/>
</dbReference>
<dbReference type="NCBIfam" id="TIGR00652">
    <property type="entry name" value="DapF"/>
    <property type="match status" value="1"/>
</dbReference>
<dbReference type="PANTHER" id="PTHR31689:SF0">
    <property type="entry name" value="DIAMINOPIMELATE EPIMERASE"/>
    <property type="match status" value="1"/>
</dbReference>
<dbReference type="PANTHER" id="PTHR31689">
    <property type="entry name" value="DIAMINOPIMELATE EPIMERASE, CHLOROPLASTIC"/>
    <property type="match status" value="1"/>
</dbReference>
<dbReference type="Pfam" id="PF01678">
    <property type="entry name" value="DAP_epimerase"/>
    <property type="match status" value="2"/>
</dbReference>
<dbReference type="SUPFAM" id="SSF54506">
    <property type="entry name" value="Diaminopimelate epimerase-like"/>
    <property type="match status" value="2"/>
</dbReference>
<dbReference type="PROSITE" id="PS01326">
    <property type="entry name" value="DAP_EPIMERASE"/>
    <property type="match status" value="1"/>
</dbReference>
<protein>
    <recommendedName>
        <fullName evidence="1">Diaminopimelate epimerase</fullName>
        <shortName evidence="1">DAP epimerase</shortName>
        <ecNumber evidence="1">5.1.1.7</ecNumber>
    </recommendedName>
    <alternativeName>
        <fullName evidence="1">PLP-independent amino acid racemase</fullName>
    </alternativeName>
</protein>
<accession>A8FNJ1</accession>
<keyword id="KW-0028">Amino-acid biosynthesis</keyword>
<keyword id="KW-0963">Cytoplasm</keyword>
<keyword id="KW-0413">Isomerase</keyword>
<keyword id="KW-0457">Lysine biosynthesis</keyword>
<comment type="function">
    <text evidence="1">Catalyzes the stereoinversion of LL-2,6-diaminopimelate (L,L-DAP) to meso-diaminopimelate (meso-DAP), a precursor of L-lysine and an essential component of the bacterial peptidoglycan.</text>
</comment>
<comment type="catalytic activity">
    <reaction evidence="1">
        <text>(2S,6S)-2,6-diaminopimelate = meso-2,6-diaminopimelate</text>
        <dbReference type="Rhea" id="RHEA:15393"/>
        <dbReference type="ChEBI" id="CHEBI:57609"/>
        <dbReference type="ChEBI" id="CHEBI:57791"/>
        <dbReference type="EC" id="5.1.1.7"/>
    </reaction>
</comment>
<comment type="pathway">
    <text evidence="1">Amino-acid biosynthesis; L-lysine biosynthesis via DAP pathway; DL-2,6-diaminopimelate from LL-2,6-diaminopimelate: step 1/1.</text>
</comment>
<comment type="subunit">
    <text evidence="1">Homodimer.</text>
</comment>
<comment type="subcellular location">
    <subcellularLocation>
        <location evidence="1">Cytoplasm</location>
    </subcellularLocation>
</comment>
<comment type="similarity">
    <text evidence="1">Belongs to the diaminopimelate epimerase family.</text>
</comment>
<sequence>MKFYKYCASGNDFVITNADRKEDRSALAKELCNRYEGIGADGFIVILPHEKYDFEWEFYNNDGSRAAMCGNGSRAAAHFVHHINKINPNMSFLTGAGVIKAKVNQDKVEVSLGKIKSVQNTFEELGKTWQLCNTGVPHLVHFCQNLDEFDTMLCQKMRQKYNANVNFVKILDENHLKVRTYERGVEDETLACGTGMGACFYLAFLNKKVQNKVKITPKSGEEVGFAYKNEELFFEGKVKYCFEANYNFS</sequence>
<proteinExistence type="inferred from homology"/>
<reference key="1">
    <citation type="journal article" date="2007" name="J. Bacteriol.">
        <title>The complete genome sequence of Campylobacter jejuni strain 81116 (NCTC11828).</title>
        <authorList>
            <person name="Pearson B.M."/>
            <person name="Gaskin D.J.H."/>
            <person name="Segers R.P.A.M."/>
            <person name="Wells J.M."/>
            <person name="Nuijten P.J.M."/>
            <person name="van Vliet A.H.M."/>
        </authorList>
    </citation>
    <scope>NUCLEOTIDE SEQUENCE [LARGE SCALE GENOMIC DNA]</scope>
    <source>
        <strain>81116 / NCTC 11828</strain>
    </source>
</reference>